<feature type="chain" id="PRO_1000080399" description="Small ribosomal subunit protein uS12">
    <location>
        <begin position="1"/>
        <end position="124"/>
    </location>
</feature>
<feature type="modified residue" description="3-methylthioaspartic acid" evidence="1">
    <location>
        <position position="89"/>
    </location>
</feature>
<proteinExistence type="inferred from homology"/>
<name>RS12_HISS2</name>
<organism>
    <name type="scientific">Histophilus somni (strain 2336)</name>
    <name type="common">Haemophilus somnus</name>
    <dbReference type="NCBI Taxonomy" id="228400"/>
    <lineage>
        <taxon>Bacteria</taxon>
        <taxon>Pseudomonadati</taxon>
        <taxon>Pseudomonadota</taxon>
        <taxon>Gammaproteobacteria</taxon>
        <taxon>Pasteurellales</taxon>
        <taxon>Pasteurellaceae</taxon>
        <taxon>Histophilus</taxon>
    </lineage>
</organism>
<keyword id="KW-0488">Methylation</keyword>
<keyword id="KW-0687">Ribonucleoprotein</keyword>
<keyword id="KW-0689">Ribosomal protein</keyword>
<keyword id="KW-0694">RNA-binding</keyword>
<keyword id="KW-0699">rRNA-binding</keyword>
<keyword id="KW-0820">tRNA-binding</keyword>
<sequence length="124" mass="13795">MATINQLVRKPRVKKVVKSNVPALESCPQKRGVCTRVYTTTPKKPNSALRKVCRIRLTNGFEVTSYIGGEGHNLQEHSVVLIRGGRVKDLPGVRYHTVRGALDCAGVKDRKQSRSKYGVKRPKA</sequence>
<gene>
    <name evidence="2" type="primary">rpsL</name>
    <name type="ordered locus">HSM_1809</name>
</gene>
<evidence type="ECO:0000250" key="1"/>
<evidence type="ECO:0000255" key="2">
    <source>
        <dbReference type="HAMAP-Rule" id="MF_00403"/>
    </source>
</evidence>
<evidence type="ECO:0000305" key="3"/>
<comment type="function">
    <text evidence="2">With S4 and S5 plays an important role in translational accuracy.</text>
</comment>
<comment type="function">
    <text evidence="2">Interacts with and stabilizes bases of the 16S rRNA that are involved in tRNA selection in the A site and with the mRNA backbone. Located at the interface of the 30S and 50S subunits, it traverses the body of the 30S subunit contacting proteins on the other side and probably holding the rRNA structure together. The combined cluster of proteins S8, S12 and S17 appears to hold together the shoulder and platform of the 30S subunit.</text>
</comment>
<comment type="subunit">
    <text evidence="2">Part of the 30S ribosomal subunit. Contacts proteins S8 and S17. May interact with IF1 in the 30S initiation complex.</text>
</comment>
<comment type="similarity">
    <text evidence="2">Belongs to the universal ribosomal protein uS12 family.</text>
</comment>
<reference key="1">
    <citation type="submission" date="2008-02" db="EMBL/GenBank/DDBJ databases">
        <title>Complete sequence of Haemophilus somnus 2336.</title>
        <authorList>
            <consortium name="US DOE Joint Genome Institute"/>
            <person name="Siddaramappa S."/>
            <person name="Duncan A.J."/>
            <person name="Challacombe J.F."/>
            <person name="Rainey D."/>
            <person name="Gillaspy A.F."/>
            <person name="Carson M."/>
            <person name="Gipson J."/>
            <person name="Gipson M."/>
            <person name="Bruce D."/>
            <person name="Detter J.C."/>
            <person name="Han C.S."/>
            <person name="Land M."/>
            <person name="Tapia R."/>
            <person name="Thompson L.S."/>
            <person name="Orvis J."/>
            <person name="Zaitshik J."/>
            <person name="Barnes G."/>
            <person name="Brettin T.S."/>
            <person name="Dyer D.W."/>
            <person name="Inzana T.J."/>
        </authorList>
    </citation>
    <scope>NUCLEOTIDE SEQUENCE [LARGE SCALE GENOMIC DNA]</scope>
    <source>
        <strain>2336</strain>
    </source>
</reference>
<dbReference type="EMBL" id="CP000947">
    <property type="protein sequence ID" value="ACA31595.1"/>
    <property type="molecule type" value="Genomic_DNA"/>
</dbReference>
<dbReference type="RefSeq" id="WP_011609792.1">
    <property type="nucleotide sequence ID" value="NC_010519.1"/>
</dbReference>
<dbReference type="SMR" id="B0UWC6"/>
<dbReference type="STRING" id="228400.HSM_1809"/>
<dbReference type="GeneID" id="31488117"/>
<dbReference type="KEGG" id="hsm:HSM_1809"/>
<dbReference type="HOGENOM" id="CLU_104295_1_2_6"/>
<dbReference type="GO" id="GO:0015935">
    <property type="term" value="C:small ribosomal subunit"/>
    <property type="evidence" value="ECO:0007669"/>
    <property type="project" value="InterPro"/>
</dbReference>
<dbReference type="GO" id="GO:0019843">
    <property type="term" value="F:rRNA binding"/>
    <property type="evidence" value="ECO:0007669"/>
    <property type="project" value="UniProtKB-UniRule"/>
</dbReference>
<dbReference type="GO" id="GO:0003735">
    <property type="term" value="F:structural constituent of ribosome"/>
    <property type="evidence" value="ECO:0007669"/>
    <property type="project" value="InterPro"/>
</dbReference>
<dbReference type="GO" id="GO:0000049">
    <property type="term" value="F:tRNA binding"/>
    <property type="evidence" value="ECO:0007669"/>
    <property type="project" value="UniProtKB-UniRule"/>
</dbReference>
<dbReference type="GO" id="GO:0006412">
    <property type="term" value="P:translation"/>
    <property type="evidence" value="ECO:0007669"/>
    <property type="project" value="UniProtKB-UniRule"/>
</dbReference>
<dbReference type="CDD" id="cd03368">
    <property type="entry name" value="Ribosomal_S12"/>
    <property type="match status" value="1"/>
</dbReference>
<dbReference type="FunFam" id="2.40.50.140:FF:000001">
    <property type="entry name" value="30S ribosomal protein S12"/>
    <property type="match status" value="1"/>
</dbReference>
<dbReference type="Gene3D" id="2.40.50.140">
    <property type="entry name" value="Nucleic acid-binding proteins"/>
    <property type="match status" value="1"/>
</dbReference>
<dbReference type="HAMAP" id="MF_00403_B">
    <property type="entry name" value="Ribosomal_uS12_B"/>
    <property type="match status" value="1"/>
</dbReference>
<dbReference type="InterPro" id="IPR012340">
    <property type="entry name" value="NA-bd_OB-fold"/>
</dbReference>
<dbReference type="InterPro" id="IPR006032">
    <property type="entry name" value="Ribosomal_uS12"/>
</dbReference>
<dbReference type="InterPro" id="IPR005679">
    <property type="entry name" value="Ribosomal_uS12_bac"/>
</dbReference>
<dbReference type="NCBIfam" id="TIGR00981">
    <property type="entry name" value="rpsL_bact"/>
    <property type="match status" value="1"/>
</dbReference>
<dbReference type="PANTHER" id="PTHR11652">
    <property type="entry name" value="30S RIBOSOMAL PROTEIN S12 FAMILY MEMBER"/>
    <property type="match status" value="1"/>
</dbReference>
<dbReference type="Pfam" id="PF00164">
    <property type="entry name" value="Ribosom_S12_S23"/>
    <property type="match status" value="1"/>
</dbReference>
<dbReference type="PIRSF" id="PIRSF002133">
    <property type="entry name" value="Ribosomal_S12/S23"/>
    <property type="match status" value="1"/>
</dbReference>
<dbReference type="PRINTS" id="PR01034">
    <property type="entry name" value="RIBOSOMALS12"/>
</dbReference>
<dbReference type="SUPFAM" id="SSF50249">
    <property type="entry name" value="Nucleic acid-binding proteins"/>
    <property type="match status" value="1"/>
</dbReference>
<dbReference type="PROSITE" id="PS00055">
    <property type="entry name" value="RIBOSOMAL_S12"/>
    <property type="match status" value="1"/>
</dbReference>
<protein>
    <recommendedName>
        <fullName evidence="2">Small ribosomal subunit protein uS12</fullName>
    </recommendedName>
    <alternativeName>
        <fullName evidence="3">30S ribosomal protein S12</fullName>
    </alternativeName>
</protein>
<accession>B0UWC6</accession>